<proteinExistence type="inferred from homology"/>
<organism>
    <name type="scientific">Escherichia coli (strain K12)</name>
    <dbReference type="NCBI Taxonomy" id="83333"/>
    <lineage>
        <taxon>Bacteria</taxon>
        <taxon>Pseudomonadati</taxon>
        <taxon>Pseudomonadota</taxon>
        <taxon>Gammaproteobacteria</taxon>
        <taxon>Enterobacterales</taxon>
        <taxon>Enterobacteriaceae</taxon>
        <taxon>Escherichia</taxon>
    </lineage>
</organism>
<dbReference type="EMBL" id="U28377">
    <property type="protein sequence ID" value="AAA69169.1"/>
    <property type="molecule type" value="Genomic_DNA"/>
</dbReference>
<dbReference type="EMBL" id="U00096">
    <property type="protein sequence ID" value="AAC76038.1"/>
    <property type="molecule type" value="Genomic_DNA"/>
</dbReference>
<dbReference type="EMBL" id="AP009048">
    <property type="protein sequence ID" value="BAE77061.1"/>
    <property type="molecule type" value="Genomic_DNA"/>
</dbReference>
<dbReference type="PIR" id="H65086">
    <property type="entry name" value="H65086"/>
</dbReference>
<dbReference type="RefSeq" id="NP_417475.1">
    <property type="nucleotide sequence ID" value="NC_000913.3"/>
</dbReference>
<dbReference type="RefSeq" id="WP_000439331.1">
    <property type="nucleotide sequence ID" value="NZ_STEB01000001.1"/>
</dbReference>
<dbReference type="BioGRID" id="4261415">
    <property type="interactions" value="47"/>
</dbReference>
<dbReference type="FunCoup" id="P67244">
    <property type="interactions" value="19"/>
</dbReference>
<dbReference type="STRING" id="511145.b3002"/>
<dbReference type="PaxDb" id="511145-b3002"/>
<dbReference type="EnsemblBacteria" id="AAC76038">
    <property type="protein sequence ID" value="AAC76038"/>
    <property type="gene ID" value="b3002"/>
</dbReference>
<dbReference type="GeneID" id="947479"/>
<dbReference type="KEGG" id="ecj:JW2971"/>
<dbReference type="KEGG" id="eco:b3002"/>
<dbReference type="KEGG" id="ecoc:C3026_16415"/>
<dbReference type="PATRIC" id="fig|1411691.4.peg.3726"/>
<dbReference type="EchoBASE" id="EB2832"/>
<dbReference type="eggNOG" id="COG2862">
    <property type="taxonomic scope" value="Bacteria"/>
</dbReference>
<dbReference type="HOGENOM" id="CLU_097887_1_1_6"/>
<dbReference type="InParanoid" id="P67244"/>
<dbReference type="OMA" id="HTIMWQV"/>
<dbReference type="OrthoDB" id="9783569at2"/>
<dbReference type="PhylomeDB" id="P67244"/>
<dbReference type="BioCyc" id="EcoCyc:G7559-MONOMER"/>
<dbReference type="PRO" id="PR:P67244"/>
<dbReference type="Proteomes" id="UP000000625">
    <property type="component" value="Chromosome"/>
</dbReference>
<dbReference type="GO" id="GO:0005886">
    <property type="term" value="C:plasma membrane"/>
    <property type="evidence" value="ECO:0000314"/>
    <property type="project" value="EcoCyc"/>
</dbReference>
<dbReference type="GO" id="GO:0042542">
    <property type="term" value="P:response to hydrogen peroxide"/>
    <property type="evidence" value="ECO:0000315"/>
    <property type="project" value="EcoCyc"/>
</dbReference>
<dbReference type="HAMAP" id="MF_00143">
    <property type="entry name" value="UPF0114"/>
    <property type="match status" value="1"/>
</dbReference>
<dbReference type="InterPro" id="IPR005134">
    <property type="entry name" value="UPF0114"/>
</dbReference>
<dbReference type="InterPro" id="IPR020761">
    <property type="entry name" value="UPF0114_bac"/>
</dbReference>
<dbReference type="NCBIfam" id="TIGR00645">
    <property type="entry name" value="HI0507"/>
    <property type="match status" value="1"/>
</dbReference>
<dbReference type="PANTHER" id="PTHR38596">
    <property type="entry name" value="UPF0114 PROTEIN YQHA"/>
    <property type="match status" value="1"/>
</dbReference>
<dbReference type="PANTHER" id="PTHR38596:SF1">
    <property type="entry name" value="UPF0114 PROTEIN YQHA"/>
    <property type="match status" value="1"/>
</dbReference>
<dbReference type="Pfam" id="PF03350">
    <property type="entry name" value="UPF0114"/>
    <property type="match status" value="1"/>
</dbReference>
<gene>
    <name type="primary">yqhA</name>
    <name type="ordered locus">b3002</name>
    <name type="ordered locus">JW2971</name>
</gene>
<reference key="1">
    <citation type="journal article" date="1997" name="Science">
        <title>The complete genome sequence of Escherichia coli K-12.</title>
        <authorList>
            <person name="Blattner F.R."/>
            <person name="Plunkett G. III"/>
            <person name="Bloch C.A."/>
            <person name="Perna N.T."/>
            <person name="Burland V."/>
            <person name="Riley M."/>
            <person name="Collado-Vides J."/>
            <person name="Glasner J.D."/>
            <person name="Rode C.K."/>
            <person name="Mayhew G.F."/>
            <person name="Gregor J."/>
            <person name="Davis N.W."/>
            <person name="Kirkpatrick H.A."/>
            <person name="Goeden M.A."/>
            <person name="Rose D.J."/>
            <person name="Mau B."/>
            <person name="Shao Y."/>
        </authorList>
    </citation>
    <scope>NUCLEOTIDE SEQUENCE [LARGE SCALE GENOMIC DNA]</scope>
    <source>
        <strain>K12 / MG1655 / ATCC 47076</strain>
    </source>
</reference>
<reference key="2">
    <citation type="journal article" date="2006" name="Mol. Syst. Biol.">
        <title>Highly accurate genome sequences of Escherichia coli K-12 strains MG1655 and W3110.</title>
        <authorList>
            <person name="Hayashi K."/>
            <person name="Morooka N."/>
            <person name="Yamamoto Y."/>
            <person name="Fujita K."/>
            <person name="Isono K."/>
            <person name="Choi S."/>
            <person name="Ohtsubo E."/>
            <person name="Baba T."/>
            <person name="Wanner B.L."/>
            <person name="Mori H."/>
            <person name="Horiuchi T."/>
        </authorList>
    </citation>
    <scope>NUCLEOTIDE SEQUENCE [LARGE SCALE GENOMIC DNA]</scope>
    <source>
        <strain>K12 / W3110 / ATCC 27325 / DSM 5911</strain>
    </source>
</reference>
<evidence type="ECO:0000255" key="1"/>
<evidence type="ECO:0000305" key="2"/>
<accession>P67244</accession>
<accession>P52082</accession>
<accession>Q2M9J5</accession>
<name>YQHA_ECOLI</name>
<protein>
    <recommendedName>
        <fullName>UPF0114 protein YqhA</fullName>
    </recommendedName>
</protein>
<feature type="chain" id="PRO_0000214367" description="UPF0114 protein YqhA">
    <location>
        <begin position="1"/>
        <end position="164"/>
    </location>
</feature>
<feature type="transmembrane region" description="Helical" evidence="1">
    <location>
        <begin position="15"/>
        <end position="35"/>
    </location>
</feature>
<feature type="transmembrane region" description="Helical" evidence="1">
    <location>
        <begin position="53"/>
        <end position="73"/>
    </location>
</feature>
<feature type="transmembrane region" description="Helical" evidence="1">
    <location>
        <begin position="136"/>
        <end position="156"/>
    </location>
</feature>
<keyword id="KW-1003">Cell membrane</keyword>
<keyword id="KW-0472">Membrane</keyword>
<keyword id="KW-1185">Reference proteome</keyword>
<keyword id="KW-0812">Transmembrane</keyword>
<keyword id="KW-1133">Transmembrane helix</keyword>
<comment type="subcellular location">
    <subcellularLocation>
        <location evidence="2">Cell membrane</location>
        <topology evidence="2">Multi-pass membrane protein</topology>
    </subcellularLocation>
</comment>
<comment type="similarity">
    <text evidence="2">Belongs to the UPF0114 family.</text>
</comment>
<sequence>MERFLENAMYASRWLLAPVYFGLSLALVALALKFFQEIIHVLPNIFSMAESDLILVLLSLVDMTLVGGLLVMVMFSGYENFVSQLDISENKEKLNWLGKMDATSLKNKVAASIVAISSIHLLRVFMDAKNVPDNKLMWYVIIHLTFVLSAFVMGYLDRLTRHNH</sequence>